<organismHost>
    <name type="scientific">Cynomys gunnisoni</name>
    <name type="common">Gunnison's prairie dog</name>
    <name type="synonym">Spermophilus gunnisoni</name>
    <dbReference type="NCBI Taxonomy" id="45479"/>
</organismHost>
<organismHost>
    <name type="scientific">Cynomys leucurus</name>
    <name type="common">White-tailed prairie dog</name>
    <dbReference type="NCBI Taxonomy" id="99825"/>
</organismHost>
<organismHost>
    <name type="scientific">Cynomys ludovicianus</name>
    <name type="common">Black-tailed prairie dog</name>
    <dbReference type="NCBI Taxonomy" id="45480"/>
</organismHost>
<organismHost>
    <name type="scientific">Cynomys mexicanus</name>
    <name type="common">Mexican prairie dog</name>
    <dbReference type="NCBI Taxonomy" id="99826"/>
</organismHost>
<organismHost>
    <name type="scientific">Cynomys parvidens</name>
    <name type="common">Utah prairie dog</name>
    <dbReference type="NCBI Taxonomy" id="99827"/>
</organismHost>
<organismHost>
    <name type="scientific">Gliridae</name>
    <name type="common">dormice</name>
    <dbReference type="NCBI Taxonomy" id="30650"/>
</organismHost>
<organismHost>
    <name type="scientific">Heliosciurus ruwenzorii</name>
    <name type="common">Ruwenzori sun squirrel</name>
    <dbReference type="NCBI Taxonomy" id="226685"/>
</organismHost>
<organismHost>
    <name type="scientific">Homo sapiens</name>
    <name type="common">Human</name>
    <dbReference type="NCBI Taxonomy" id="9606"/>
</organismHost>
<organismHost>
    <name type="scientific">Mus musculus</name>
    <name type="common">Mouse</name>
    <dbReference type="NCBI Taxonomy" id="10090"/>
</organismHost>
<reference key="1">
    <citation type="journal article" date="2022" name="J. Infect. Dis.">
        <title>Exportation of Monkeypox virus from the African continent.</title>
        <authorList>
            <person name="Mauldin M.R."/>
            <person name="McCollum A.M."/>
            <person name="Nakazawa Y.J."/>
            <person name="Mandra A."/>
            <person name="Whitehouse E.R."/>
            <person name="Davidson W."/>
            <person name="Zhao H."/>
            <person name="Gao J."/>
            <person name="Li Y."/>
            <person name="Doty J."/>
            <person name="Yinka-Ogunleye A."/>
            <person name="Akinpelu A."/>
            <person name="Aruna O."/>
            <person name="Naidoo D."/>
            <person name="Lewandowski K."/>
            <person name="Afrough B."/>
            <person name="Graham V."/>
            <person name="Aarons E."/>
            <person name="Hewson R."/>
            <person name="Vipond R."/>
            <person name="Dunning J."/>
            <person name="Chand M."/>
            <person name="Brown C."/>
            <person name="Cohen-Gihon I."/>
            <person name="Erez N."/>
            <person name="Shifman O."/>
            <person name="Israeli O."/>
            <person name="Sharon M."/>
            <person name="Schwartz E."/>
            <person name="Beth-Din A."/>
            <person name="Zvi A."/>
            <person name="Mak T.M."/>
            <person name="Ng Y.K."/>
            <person name="Cui L."/>
            <person name="Lin R.T.P."/>
            <person name="Olson V.A."/>
            <person name="Brooks T."/>
            <person name="Paran N."/>
            <person name="Ihekweazu C."/>
            <person name="Reynolds M.G."/>
        </authorList>
    </citation>
    <scope>NUCLEOTIDE SEQUENCE [LARGE SCALE GENOMIC DNA]</scope>
    <source>
        <strain>MPXV-M5312_HM12_Rivers</strain>
    </source>
</reference>
<comment type="induction">
    <text evidence="1">Expressed in the early phase of the viral replicative cycle.</text>
</comment>
<comment type="similarity">
    <text evidence="3">Belongs to the orthopoxvirus OPG030 family.</text>
</comment>
<feature type="chain" id="PRO_0000457195" description="Protein OPG030">
    <location>
        <begin position="1"/>
        <end position="206"/>
    </location>
</feature>
<feature type="domain" description="BACK" evidence="2">
    <location>
        <begin position="99"/>
        <end position="181"/>
    </location>
</feature>
<organism>
    <name type="scientific">Monkeypox virus</name>
    <dbReference type="NCBI Taxonomy" id="10244"/>
    <lineage>
        <taxon>Viruses</taxon>
        <taxon>Varidnaviria</taxon>
        <taxon>Bamfordvirae</taxon>
        <taxon>Nucleocytoviricota</taxon>
        <taxon>Pokkesviricetes</taxon>
        <taxon>Chitovirales</taxon>
        <taxon>Poxviridae</taxon>
        <taxon>Chordopoxvirinae</taxon>
        <taxon>Orthopoxvirus</taxon>
    </lineage>
</organism>
<name>PG030_MONPV</name>
<dbReference type="EMBL" id="MT903340">
    <property type="protein sequence ID" value="QNP12887.1"/>
    <property type="molecule type" value="Genomic_DNA"/>
</dbReference>
<dbReference type="RefSeq" id="YP_010377014.1">
    <property type="nucleotide sequence ID" value="NC_063383.1"/>
</dbReference>
<dbReference type="SMR" id="A0A7H0DN04"/>
<dbReference type="GeneID" id="72551429"/>
<dbReference type="Proteomes" id="UP000516359">
    <property type="component" value="Genome"/>
</dbReference>
<dbReference type="Gene3D" id="1.25.40.420">
    <property type="match status" value="1"/>
</dbReference>
<dbReference type="InterPro" id="IPR011705">
    <property type="entry name" value="BACK"/>
</dbReference>
<dbReference type="InterPro" id="IPR009177">
    <property type="entry name" value="Orthopox_C5"/>
</dbReference>
<dbReference type="PANTHER" id="PTHR45632:SF5">
    <property type="entry name" value="KELCH-LIKE PROTEIN 22"/>
    <property type="match status" value="1"/>
</dbReference>
<dbReference type="PANTHER" id="PTHR45632">
    <property type="entry name" value="LD33804P"/>
    <property type="match status" value="1"/>
</dbReference>
<dbReference type="Pfam" id="PF07707">
    <property type="entry name" value="BACK"/>
    <property type="match status" value="1"/>
</dbReference>
<dbReference type="PIRSF" id="PIRSF003781">
    <property type="entry name" value="VAC_C5L"/>
    <property type="match status" value="1"/>
</dbReference>
<dbReference type="SMART" id="SM00875">
    <property type="entry name" value="BACK"/>
    <property type="match status" value="1"/>
</dbReference>
<evidence type="ECO:0000250" key="1">
    <source>
        <dbReference type="UniProtKB" id="P17367"/>
    </source>
</evidence>
<evidence type="ECO:0000255" key="2"/>
<evidence type="ECO:0000305" key="3"/>
<accession>A0A7H0DN04</accession>
<gene>
    <name type="primary">OPG030</name>
    <name type="ORF">MPXVgp015</name>
</gene>
<protein>
    <recommendedName>
        <fullName>Protein OPG030</fullName>
    </recommendedName>
</protein>
<sequence>MTSLIMDMNRLNLDKLKHENIFSDNIIEDAKEFIFGSRKIYTDSVDDLIELYSLAKYLNNQTLKDVVIERMDYVCKYIGKDNWSTIYSFYKENGLRNSFLRQYINNNIEEICSTDQFLKLDVDSVCDILDNDEIVVTREYTILNMVLRWLENKRVNIDDFTKVMFVIRFKFITYSELTNAIEKIAPEYRQRLQDLYHKKLRVLDIL</sequence>
<proteinExistence type="inferred from homology"/>
<keyword id="KW-0244">Early protein</keyword>
<keyword id="KW-1185">Reference proteome</keyword>